<comment type="function">
    <text evidence="1">This is one of the proteins that binds to the 5S RNA in the ribosome where it forms part of the central protuberance.</text>
</comment>
<comment type="subunit">
    <text evidence="1">Part of the 50S ribosomal subunit; part of the 5S rRNA/L5/L18/L25 subcomplex. Contacts the 5S rRNA. Binds to the 5S rRNA independently of L5 and L18.</text>
</comment>
<comment type="similarity">
    <text evidence="1">Belongs to the bacterial ribosomal protein bL25 family. CTC subfamily.</text>
</comment>
<gene>
    <name evidence="1" type="primary">rplY</name>
    <name evidence="1" type="synonym">ctc</name>
    <name type="ordered locus">BB0902</name>
</gene>
<name>RL25_BORBR</name>
<feature type="chain" id="PRO_0000181518" description="Large ribosomal subunit protein bL25">
    <location>
        <begin position="1"/>
        <end position="204"/>
    </location>
</feature>
<reference key="1">
    <citation type="journal article" date="2003" name="Nat. Genet.">
        <title>Comparative analysis of the genome sequences of Bordetella pertussis, Bordetella parapertussis and Bordetella bronchiseptica.</title>
        <authorList>
            <person name="Parkhill J."/>
            <person name="Sebaihia M."/>
            <person name="Preston A."/>
            <person name="Murphy L.D."/>
            <person name="Thomson N.R."/>
            <person name="Harris D.E."/>
            <person name="Holden M.T.G."/>
            <person name="Churcher C.M."/>
            <person name="Bentley S.D."/>
            <person name="Mungall K.L."/>
            <person name="Cerdeno-Tarraga A.-M."/>
            <person name="Temple L."/>
            <person name="James K.D."/>
            <person name="Harris B."/>
            <person name="Quail M.A."/>
            <person name="Achtman M."/>
            <person name="Atkin R."/>
            <person name="Baker S."/>
            <person name="Basham D."/>
            <person name="Bason N."/>
            <person name="Cherevach I."/>
            <person name="Chillingworth T."/>
            <person name="Collins M."/>
            <person name="Cronin A."/>
            <person name="Davis P."/>
            <person name="Doggett J."/>
            <person name="Feltwell T."/>
            <person name="Goble A."/>
            <person name="Hamlin N."/>
            <person name="Hauser H."/>
            <person name="Holroyd S."/>
            <person name="Jagels K."/>
            <person name="Leather S."/>
            <person name="Moule S."/>
            <person name="Norberczak H."/>
            <person name="O'Neil S."/>
            <person name="Ormond D."/>
            <person name="Price C."/>
            <person name="Rabbinowitsch E."/>
            <person name="Rutter S."/>
            <person name="Sanders M."/>
            <person name="Saunders D."/>
            <person name="Seeger K."/>
            <person name="Sharp S."/>
            <person name="Simmonds M."/>
            <person name="Skelton J."/>
            <person name="Squares R."/>
            <person name="Squares S."/>
            <person name="Stevens K."/>
            <person name="Unwin L."/>
            <person name="Whitehead S."/>
            <person name="Barrell B.G."/>
            <person name="Maskell D.J."/>
        </authorList>
    </citation>
    <scope>NUCLEOTIDE SEQUENCE [LARGE SCALE GENOMIC DNA]</scope>
    <source>
        <strain>ATCC BAA-588 / NCTC 13252 / RB50</strain>
    </source>
</reference>
<proteinExistence type="inferred from homology"/>
<accession>Q7WNY3</accession>
<sequence length="204" mass="21714">MKFNATARSVQGSSASRRLRRAGRVPAIVYGGTAAPLNIELDHNEIYHALRKEEFHASILNMVIEGGKTEEVLLRSVQWHAYKPQVMHVDFQRVDANQALHTKVPLHFINAEVSPAVKLSGAIISHVLTELDITCLPALLPQFIEVNLGDLLGGGSIHLADIKLPKGVTFNAHGGDTNPLIAAAVVKGGGAADEGDAAAEQPAA</sequence>
<dbReference type="EMBL" id="BX640439">
    <property type="protein sequence ID" value="CAE31401.1"/>
    <property type="molecule type" value="Genomic_DNA"/>
</dbReference>
<dbReference type="RefSeq" id="WP_003808505.1">
    <property type="nucleotide sequence ID" value="NC_002927.3"/>
</dbReference>
<dbReference type="SMR" id="Q7WNY3"/>
<dbReference type="KEGG" id="bbr:BB0902"/>
<dbReference type="eggNOG" id="COG1825">
    <property type="taxonomic scope" value="Bacteria"/>
</dbReference>
<dbReference type="HOGENOM" id="CLU_075939_0_1_4"/>
<dbReference type="Proteomes" id="UP000001027">
    <property type="component" value="Chromosome"/>
</dbReference>
<dbReference type="GO" id="GO:0022625">
    <property type="term" value="C:cytosolic large ribosomal subunit"/>
    <property type="evidence" value="ECO:0007669"/>
    <property type="project" value="TreeGrafter"/>
</dbReference>
<dbReference type="GO" id="GO:0008097">
    <property type="term" value="F:5S rRNA binding"/>
    <property type="evidence" value="ECO:0007669"/>
    <property type="project" value="InterPro"/>
</dbReference>
<dbReference type="GO" id="GO:0003735">
    <property type="term" value="F:structural constituent of ribosome"/>
    <property type="evidence" value="ECO:0007669"/>
    <property type="project" value="InterPro"/>
</dbReference>
<dbReference type="GO" id="GO:0006412">
    <property type="term" value="P:translation"/>
    <property type="evidence" value="ECO:0007669"/>
    <property type="project" value="UniProtKB-UniRule"/>
</dbReference>
<dbReference type="CDD" id="cd00495">
    <property type="entry name" value="Ribosomal_L25_TL5_CTC"/>
    <property type="match status" value="1"/>
</dbReference>
<dbReference type="FunFam" id="2.40.240.10:FF:000002">
    <property type="entry name" value="50S ribosomal protein L25"/>
    <property type="match status" value="1"/>
</dbReference>
<dbReference type="Gene3D" id="2.170.120.20">
    <property type="entry name" value="Ribosomal protein L25, beta domain"/>
    <property type="match status" value="1"/>
</dbReference>
<dbReference type="Gene3D" id="2.40.240.10">
    <property type="entry name" value="Ribosomal Protein L25, Chain P"/>
    <property type="match status" value="1"/>
</dbReference>
<dbReference type="HAMAP" id="MF_01336">
    <property type="entry name" value="Ribosomal_bL25"/>
    <property type="match status" value="1"/>
</dbReference>
<dbReference type="HAMAP" id="MF_01334">
    <property type="entry name" value="Ribosomal_bL25_CTC"/>
    <property type="match status" value="1"/>
</dbReference>
<dbReference type="InterPro" id="IPR020056">
    <property type="entry name" value="Rbsml_bL25/Gln-tRNA_synth_N"/>
</dbReference>
<dbReference type="InterPro" id="IPR011035">
    <property type="entry name" value="Ribosomal_bL25/Gln-tRNA_synth"/>
</dbReference>
<dbReference type="InterPro" id="IPR020057">
    <property type="entry name" value="Ribosomal_bL25_b-dom"/>
</dbReference>
<dbReference type="InterPro" id="IPR037121">
    <property type="entry name" value="Ribosomal_bL25_C"/>
</dbReference>
<dbReference type="InterPro" id="IPR001021">
    <property type="entry name" value="Ribosomal_bL25_long"/>
</dbReference>
<dbReference type="InterPro" id="IPR020055">
    <property type="entry name" value="Ribosomal_bL25_short"/>
</dbReference>
<dbReference type="InterPro" id="IPR029751">
    <property type="entry name" value="Ribosomal_L25_dom"/>
</dbReference>
<dbReference type="InterPro" id="IPR020930">
    <property type="entry name" value="Ribosomal_uL5_bac-type"/>
</dbReference>
<dbReference type="NCBIfam" id="TIGR00731">
    <property type="entry name" value="bL25_bact_ctc"/>
    <property type="match status" value="1"/>
</dbReference>
<dbReference type="NCBIfam" id="NF004130">
    <property type="entry name" value="PRK05618.1-5"/>
    <property type="match status" value="1"/>
</dbReference>
<dbReference type="NCBIfam" id="NF004612">
    <property type="entry name" value="PRK05943.1"/>
    <property type="match status" value="1"/>
</dbReference>
<dbReference type="PANTHER" id="PTHR33284">
    <property type="entry name" value="RIBOSOMAL PROTEIN L25/GLN-TRNA SYNTHETASE, ANTI-CODON-BINDING DOMAIN-CONTAINING PROTEIN"/>
    <property type="match status" value="1"/>
</dbReference>
<dbReference type="PANTHER" id="PTHR33284:SF1">
    <property type="entry name" value="RIBOSOMAL PROTEIN L25_GLN-TRNA SYNTHETASE, ANTI-CODON-BINDING DOMAIN-CONTAINING PROTEIN"/>
    <property type="match status" value="1"/>
</dbReference>
<dbReference type="Pfam" id="PF01386">
    <property type="entry name" value="Ribosomal_L25p"/>
    <property type="match status" value="1"/>
</dbReference>
<dbReference type="Pfam" id="PF14693">
    <property type="entry name" value="Ribosomal_TL5_C"/>
    <property type="match status" value="1"/>
</dbReference>
<dbReference type="SUPFAM" id="SSF50715">
    <property type="entry name" value="Ribosomal protein L25-like"/>
    <property type="match status" value="1"/>
</dbReference>
<organism>
    <name type="scientific">Bordetella bronchiseptica (strain ATCC BAA-588 / NCTC 13252 / RB50)</name>
    <name type="common">Alcaligenes bronchisepticus</name>
    <dbReference type="NCBI Taxonomy" id="257310"/>
    <lineage>
        <taxon>Bacteria</taxon>
        <taxon>Pseudomonadati</taxon>
        <taxon>Pseudomonadota</taxon>
        <taxon>Betaproteobacteria</taxon>
        <taxon>Burkholderiales</taxon>
        <taxon>Alcaligenaceae</taxon>
        <taxon>Bordetella</taxon>
    </lineage>
</organism>
<keyword id="KW-0687">Ribonucleoprotein</keyword>
<keyword id="KW-0689">Ribosomal protein</keyword>
<keyword id="KW-0694">RNA-binding</keyword>
<keyword id="KW-0699">rRNA-binding</keyword>
<protein>
    <recommendedName>
        <fullName evidence="1">Large ribosomal subunit protein bL25</fullName>
    </recommendedName>
    <alternativeName>
        <fullName evidence="2">50S ribosomal protein L25</fullName>
    </alternativeName>
    <alternativeName>
        <fullName evidence="1">General stress protein CTC</fullName>
    </alternativeName>
</protein>
<evidence type="ECO:0000255" key="1">
    <source>
        <dbReference type="HAMAP-Rule" id="MF_01334"/>
    </source>
</evidence>
<evidence type="ECO:0000305" key="2"/>